<sequence>MWVMSQVRSMEPDLTLAAVYQAAANLTEQDKEIFSEAVKTAFSVCSSAAPSARLRMIETPTQNFMFVTSVIPSGVPSGEKKTKLNIDAALDNLALSFANKKSKKMARTYLLQNVSRTQDQQVAISGTYILYTKKHIETSLMLDKTKLVKQILEYAETPNLLGYTDVRDLECLLWLVFCGPKSFCQSDSCFGYSKTGYNAAFPNLLPPYLYECGQNNGLFFGIVQAYVFSWYSDFDFSALEISERARRRIRSLLYDLKQKFSEQEISVLPVASQMCIFCALYKQNKLSLEYVSGDLKTSVFSPIIIKDCLCVQTTISTTQMLPGTKSSAIFPVYDLRKLLSALVISEGSVRFDI</sequence>
<proteinExistence type="inferred from homology"/>
<organismHost>
    <name type="scientific">Homo sapiens</name>
    <name type="common">Human</name>
    <dbReference type="NCBI Taxonomy" id="9606"/>
</organismHost>
<gene>
    <name type="primary">U67</name>
</gene>
<feature type="chain" id="PRO_0000408443" description="Protein U67">
    <location>
        <begin position="1"/>
        <end position="353"/>
    </location>
</feature>
<reference key="1">
    <citation type="journal article" date="1999" name="J. Virol.">
        <title>Human herpesvirus 6B genome sequence: coding content and comparison with human herpesvirus 6A.</title>
        <authorList>
            <person name="Dominguez G."/>
            <person name="Dambaugh T.R."/>
            <person name="Stamey F.R."/>
            <person name="Dewhurst S."/>
            <person name="Inoue N."/>
            <person name="Pellett P.E."/>
        </authorList>
    </citation>
    <scope>NUCLEOTIDE SEQUENCE [LARGE SCALE GENOMIC DNA]</scope>
</reference>
<accession>P0DXM3</accession>
<accession>Q77PU7</accession>
<accession>Q9WT06</accession>
<dbReference type="EMBL" id="AF157706">
    <property type="protein sequence ID" value="AAD49668.1"/>
    <property type="molecule type" value="Genomic_DNA"/>
</dbReference>
<dbReference type="RefSeq" id="NP_050246.1">
    <property type="nucleotide sequence ID" value="NC_000898.1"/>
</dbReference>
<dbReference type="GeneID" id="1497067"/>
<dbReference type="KEGG" id="vg:1497067"/>
<dbReference type="Proteomes" id="UP000006930">
    <property type="component" value="Segment"/>
</dbReference>
<dbReference type="InterPro" id="IPR004280">
    <property type="entry name" value="Herpes_UL95"/>
</dbReference>
<dbReference type="Pfam" id="PF03038">
    <property type="entry name" value="Herpes_UL95"/>
    <property type="match status" value="1"/>
</dbReference>
<keyword id="KW-1185">Reference proteome</keyword>
<name>UL95_HHV6Z</name>
<organism>
    <name type="scientific">Human herpesvirus 6B (strain Z29)</name>
    <name type="common">HHV-6 variant B</name>
    <name type="synonym">Human B lymphotropic virus</name>
    <dbReference type="NCBI Taxonomy" id="36351"/>
    <lineage>
        <taxon>Viruses</taxon>
        <taxon>Duplodnaviria</taxon>
        <taxon>Heunggongvirae</taxon>
        <taxon>Peploviricota</taxon>
        <taxon>Herviviricetes</taxon>
        <taxon>Herpesvirales</taxon>
        <taxon>Orthoherpesviridae</taxon>
        <taxon>Betaherpesvirinae</taxon>
        <taxon>Roseolovirus</taxon>
        <taxon>Roseolovirus humanbeta6b</taxon>
        <taxon>Human herpesvirus 6B</taxon>
    </lineage>
</organism>
<comment type="similarity">
    <text evidence="1">Belongs to the herpesviridae UL95 family.</text>
</comment>
<protein>
    <recommendedName>
        <fullName>Protein U67</fullName>
    </recommendedName>
</protein>
<evidence type="ECO:0000305" key="1"/>